<gene>
    <name type="primary">Mcm7</name>
    <name type="synonym">Cdc47</name>
    <name type="synonym">Mcmd7</name>
</gene>
<reference key="1">
    <citation type="journal article" date="1995" name="Gene">
        <title>Sequence of mouse CDC47, a member of the minichromosome maintenance (Mcm) family involved in the DNA replication licensing system.</title>
        <authorList>
            <person name="Takizawa N."/>
            <person name="Kimura H."/>
            <person name="Sugimoto K."/>
        </authorList>
    </citation>
    <scope>NUCLEOTIDE SEQUENCE [MRNA]</scope>
    <source>
        <strain>BALB/cJ</strain>
    </source>
</reference>
<reference key="2">
    <citation type="journal article" date="2004" name="Genome Res.">
        <title>The status, quality, and expansion of the NIH full-length cDNA project: the Mammalian Gene Collection (MGC).</title>
        <authorList>
            <consortium name="The MGC Project Team"/>
        </authorList>
    </citation>
    <scope>NUCLEOTIDE SEQUENCE [LARGE SCALE MRNA]</scope>
    <source>
        <strain>C57BL/6J</strain>
        <tissue>Brain</tissue>
    </source>
</reference>
<reference key="3">
    <citation type="journal article" date="1999" name="Mol. Cell. Biol.">
        <title>Biochemical analysis of the intrinsic Mcm4-Mcm6-mcm7 DNA helicase activity.</title>
        <authorList>
            <person name="You Z."/>
            <person name="Komamura Y."/>
            <person name="Ishimi Y."/>
        </authorList>
    </citation>
    <scope>FUNCTION</scope>
    <scope>CATALYTIC ACTIVITY</scope>
    <scope>IDENTIFICATION IN THE MCM2-7 COMPLEX</scope>
</reference>
<reference key="4">
    <citation type="journal article" date="2002" name="J. Biol. Chem.">
        <title>Roles of Mcm7 and Mcm4 subunits in the DNA helicase activity of the mouse Mcm4/6/7 complex.</title>
        <authorList>
            <person name="You Z."/>
            <person name="Ishimi Y."/>
            <person name="Masai H."/>
            <person name="Hanaoka F."/>
        </authorList>
    </citation>
    <scope>FUNCTION</scope>
    <scope>IDENTIFICATION IN THE MCM2-7 COMPLEX</scope>
    <scope>MUTAGENESIS OF 387-LYS-SER-388 AND 445-ASP-GLU-446</scope>
    <scope>CATALYTIC ACTIVITY</scope>
</reference>
<reference key="5">
    <citation type="journal article" date="2010" name="Cell">
        <title>A tissue-specific atlas of mouse protein phosphorylation and expression.</title>
        <authorList>
            <person name="Huttlin E.L."/>
            <person name="Jedrychowski M.P."/>
            <person name="Elias J.E."/>
            <person name="Goswami T."/>
            <person name="Rad R."/>
            <person name="Beausoleil S.A."/>
            <person name="Villen J."/>
            <person name="Haas W."/>
            <person name="Sowa M.E."/>
            <person name="Gygi S.P."/>
        </authorList>
    </citation>
    <scope>IDENTIFICATION BY MASS SPECTROMETRY [LARGE SCALE ANALYSIS]</scope>
    <source>
        <tissue>Brown adipose tissue</tissue>
        <tissue>Heart</tissue>
        <tissue>Kidney</tissue>
        <tissue>Liver</tissue>
        <tissue>Lung</tissue>
        <tissue>Pancreas</tissue>
        <tissue>Spleen</tissue>
        <tissue>Testis</tissue>
    </source>
</reference>
<reference key="6">
    <citation type="journal article" date="2021" name="EMBO Rep.">
        <title>CUL2LRR1, TRAIP and p97 control CMG helicase disassembly in the mammalian cell cycle.</title>
        <authorList>
            <person name="Villa F."/>
            <person name="Fujisawa R."/>
            <person name="Ainsworth J."/>
            <person name="Nishimura K."/>
            <person name="Lie-A-Ling M."/>
            <person name="Lacaud G."/>
            <person name="Labib K.P."/>
        </authorList>
    </citation>
    <scope>UBIQUITINATION</scope>
</reference>
<evidence type="ECO:0000250" key="1"/>
<evidence type="ECO:0000250" key="2">
    <source>
        <dbReference type="UniProtKB" id="P33993"/>
    </source>
</evidence>
<evidence type="ECO:0000250" key="3">
    <source>
        <dbReference type="UniProtKB" id="Q91876"/>
    </source>
</evidence>
<evidence type="ECO:0000269" key="4">
    <source>
    </source>
</evidence>
<evidence type="ECO:0000269" key="5">
    <source>
    </source>
</evidence>
<evidence type="ECO:0000269" key="6">
    <source>
    </source>
</evidence>
<evidence type="ECO:0000305" key="7"/>
<organism>
    <name type="scientific">Mus musculus</name>
    <name type="common">Mouse</name>
    <dbReference type="NCBI Taxonomy" id="10090"/>
    <lineage>
        <taxon>Eukaryota</taxon>
        <taxon>Metazoa</taxon>
        <taxon>Chordata</taxon>
        <taxon>Craniata</taxon>
        <taxon>Vertebrata</taxon>
        <taxon>Euteleostomi</taxon>
        <taxon>Mammalia</taxon>
        <taxon>Eutheria</taxon>
        <taxon>Euarchontoglires</taxon>
        <taxon>Glires</taxon>
        <taxon>Rodentia</taxon>
        <taxon>Myomorpha</taxon>
        <taxon>Muroidea</taxon>
        <taxon>Muridae</taxon>
        <taxon>Murinae</taxon>
        <taxon>Mus</taxon>
        <taxon>Mus</taxon>
    </lineage>
</organism>
<comment type="function">
    <text evidence="2 5">Acts as a component of the MCM2-7 complex (MCM complex) which is the replicative helicase essential for 'once per cell cycle' DNA replication initiation and elongation in eukaryotic cells. Core component of CDC45-MCM-GINS (CMG) helicase, the molecular machine that unwinds template DNA during replication, and around which the replisome is built. The active ATPase sites in the MCM2-7 ring are formed through the interaction surfaces of two neighboring subunits such that a critical structure of a conserved arginine finger motif is provided in trans relative to the ATP-binding site of the Walker A box of the adjacent subunit. The six ATPase active sites, however, are likely to contribute differentially to the complex helicase activity (By similarity). Uncomplexed form does not show ATPase or DNA helicase (PubMed:12207017). Required for S-phase checkpoint activation upon UV-induced damage (By similarity).</text>
</comment>
<comment type="catalytic activity">
    <reaction evidence="5">
        <text>ATP + H2O = ADP + phosphate + H(+)</text>
        <dbReference type="Rhea" id="RHEA:13065"/>
        <dbReference type="ChEBI" id="CHEBI:15377"/>
        <dbReference type="ChEBI" id="CHEBI:15378"/>
        <dbReference type="ChEBI" id="CHEBI:30616"/>
        <dbReference type="ChEBI" id="CHEBI:43474"/>
        <dbReference type="ChEBI" id="CHEBI:456216"/>
        <dbReference type="EC" id="3.6.4.12"/>
    </reaction>
    <physiologicalReaction direction="left-to-right" evidence="5">
        <dbReference type="Rhea" id="RHEA:13066"/>
    </physiologicalReaction>
</comment>
<comment type="subunit">
    <text evidence="2 3">Component of the MCM2-7 complex. The complex forms a toroidal hexameric ring with the proposed subunit order MCM2-MCM6-MCM4-MCM7-MCM3-MCM5. Component of the CMG helicase complex, a hexameric ring of related MCM2-7 subunits stabilized by CDC45 and the tetrameric GINS complex. Interacts with the ATR-ATRIP complex and with RAD17. Interacts with TIPIN. Interacts with MCMBP. Interacts with ANKRD17. Component of the replisome complex composed of at least DONSON, MCM2, MCM7, PCNA and TICRR.</text>
</comment>
<comment type="interaction">
    <interactant intactId="EBI-457180">
        <id>Q61881</id>
    </interactant>
    <interactant intactId="EBI-1005742">
        <id>P46414</id>
        <label>Cdkn1b</label>
    </interactant>
    <organismsDiffer>false</organismsDiffer>
    <experiments>2</experiments>
</comment>
<comment type="subcellular location">
    <subcellularLocation>
        <location evidence="3">Nucleus</location>
    </subcellularLocation>
    <subcellularLocation>
        <location evidence="3">Chromosome</location>
    </subcellularLocation>
    <text evidence="3">Associated with chromatin before the formation of nuclei and detaches from it as DNA replication progresses.</text>
</comment>
<comment type="PTM">
    <text evidence="2">O-glycosylated (O-GlcNAcylated), in a cell cycle-dependent manner.</text>
</comment>
<comment type="PTM">
    <text evidence="3 6">Ubiquitinated by ECS(LRR1) E3 ubiquitin-protein ligase complex when forks converge following formation of DNA interstrand cross-links (PubMed:33590678). During mitosis, ubiquitinated by TRAIP when forks converge following formation of DNA interstrand cross-links (PubMed:33590678). Short ubiquitin chains on MCM7 promote recruitment of DNA glycosylase NEIL3 (By similarity). If the interstrand cross-link cannot be cleaved by NEIL3, the ubiquitin chains continue to grow on MCM7, promoting the unloading of the CMG helicase complex by the VCP/p97 ATPase (PubMed:33590678).</text>
</comment>
<comment type="miscellaneous">
    <text evidence="4">Early fractionation of eukaryotic MCM proteins yielded a variety of dimeric, trimeric and tetrameric complexes with unclear biological significance. Specifically a MCM467 subcomplex is shown to have in vitro helicase activity which is inhibited by the MCM2 subunit. The MCM2-7 hexamer is the proposed physiological active complex.</text>
</comment>
<comment type="similarity">
    <text evidence="7">Belongs to the MCM family.</text>
</comment>
<feature type="initiator methionine" description="Removed" evidence="2">
    <location>
        <position position="1"/>
    </location>
</feature>
<feature type="chain" id="PRO_0000194120" description="DNA replication licensing factor MCM7">
    <location>
        <begin position="2"/>
        <end position="719"/>
    </location>
</feature>
<feature type="domain" description="MCM">
    <location>
        <begin position="332"/>
        <end position="538"/>
    </location>
</feature>
<feature type="region of interest" description="Interaction with RAD17" evidence="1">
    <location>
        <begin position="521"/>
        <end position="564"/>
    </location>
</feature>
<feature type="region of interest" description="Interaction with ATRIP" evidence="1">
    <location>
        <begin position="577"/>
        <end position="719"/>
    </location>
</feature>
<feature type="short sequence motif" description="Arginine finger">
    <location>
        <begin position="513"/>
        <end position="516"/>
    </location>
</feature>
<feature type="binding site" evidence="2">
    <location>
        <position position="345"/>
    </location>
    <ligand>
        <name>ATP</name>
        <dbReference type="ChEBI" id="CHEBI:30616"/>
        <label>1</label>
        <note>ligand shared with MCM3</note>
    </ligand>
</feature>
<feature type="binding site" evidence="2">
    <location>
        <position position="384"/>
    </location>
    <ligand>
        <name>ATP</name>
        <dbReference type="ChEBI" id="CHEBI:30616"/>
        <label>1</label>
        <note>ligand shared with MCM3</note>
    </ligand>
</feature>
<feature type="binding site" evidence="2">
    <location>
        <position position="386"/>
    </location>
    <ligand>
        <name>ATP</name>
        <dbReference type="ChEBI" id="CHEBI:30616"/>
        <label>1</label>
        <note>ligand shared with MCM3</note>
    </ligand>
</feature>
<feature type="binding site" evidence="2">
    <location>
        <position position="387"/>
    </location>
    <ligand>
        <name>ATP</name>
        <dbReference type="ChEBI" id="CHEBI:30616"/>
        <label>1</label>
        <note>ligand shared with MCM3</note>
    </ligand>
</feature>
<feature type="binding site" evidence="2">
    <location>
        <position position="388"/>
    </location>
    <ligand>
        <name>ATP</name>
        <dbReference type="ChEBI" id="CHEBI:30616"/>
        <label>1</label>
        <note>ligand shared with MCM3</note>
    </ligand>
</feature>
<feature type="binding site" evidence="2">
    <location>
        <position position="489"/>
    </location>
    <ligand>
        <name>ATP</name>
        <dbReference type="ChEBI" id="CHEBI:30616"/>
        <label>1</label>
        <note>ligand shared with MCM3</note>
    </ligand>
</feature>
<feature type="binding site" evidence="2">
    <location>
        <position position="514"/>
    </location>
    <ligand>
        <name>ATP</name>
        <dbReference type="ChEBI" id="CHEBI:30616"/>
        <label>2</label>
        <note>ligand shared with MCM4</note>
    </ligand>
</feature>
<feature type="binding site" evidence="2">
    <location>
        <position position="604"/>
    </location>
    <ligand>
        <name>ATP</name>
        <dbReference type="ChEBI" id="CHEBI:30616"/>
        <label>2</label>
        <note>ligand shared with MCM4</note>
    </ligand>
</feature>
<feature type="modified residue" description="N-acetylalanine" evidence="2">
    <location>
        <position position="2"/>
    </location>
</feature>
<feature type="modified residue" description="Phosphoserine" evidence="2">
    <location>
        <position position="314"/>
    </location>
</feature>
<feature type="modified residue" description="Phosphoserine" evidence="2">
    <location>
        <position position="365"/>
    </location>
</feature>
<feature type="modified residue" description="Phosphoserine" evidence="2">
    <location>
        <position position="500"/>
    </location>
</feature>
<feature type="modified residue" description="Phosphoserine" evidence="2">
    <location>
        <position position="678"/>
    </location>
</feature>
<feature type="cross-link" description="Glycyl lysine isopeptide (Lys-Gly) (interchain with G-Cter in SUMO2)" evidence="2">
    <location>
        <position position="15"/>
    </location>
</feature>
<feature type="cross-link" description="Glycyl lysine isopeptide (Lys-Gly) (interchain with G-Cter in SUMO2)" evidence="2">
    <location>
        <position position="28"/>
    </location>
</feature>
<feature type="mutagenesis site" description="Almost abolishes MCM complex DNA helicase activity. Strongly decreases MCM complex ATPase activity. No effect on MCM complex formation. No effect on ATP and ssDNA binding." evidence="5">
    <original>KS</original>
    <variation>AA</variation>
    <location>
        <begin position="387"/>
        <end position="388"/>
    </location>
</feature>
<feature type="mutagenesis site" description="Strongly decreases MCM complex ATPase and DNA helicase activities. No effect on MCM complex formation. No effect on ATP and ssDNA binding." evidence="5">
    <original>DE</original>
    <variation>AA</variation>
    <location>
        <begin position="445"/>
        <end position="446"/>
    </location>
</feature>
<sequence length="719" mass="81211">MALKDYAIEKEKVKKFLQEFYYENELGKKQFKYGTQLVHLAHREQVALYVDLDDIAEDDPELVDSICENAKRYSRLFGDVVQELLPEYKEKEVVNKDVLDVYIEHRLMMEQRSRDPGAVRNPQNQYPSELMRRFELYFRGPSSSKPRVIREVRADSVGKLLTVRGIVTRVSEVKPRMVVATYTCDQCGAETYQPIQSPTFMPLIMCPSQECQTNRSGGRLYLQTRGSKFVKFQEMKIQEHSDQVPVGNIPRSITVVLEGENTRIAQPGDHVSVTGIFLPVLRTGFQQMAQGLLSETYLEAHWIVKMTKSDDDVSGAGELSSEELKQIAEEDFYEKLAASIAPEIYGHEDVKKALLLLLVGGVDQSPQGMKIRGNIHICLMGDPGVAKSQLLSYIDRLAPRSQYTTGRGSSGVGLTAAVLRDSVSGELTLEGGALVLADQGVCCIDEFDKMAEADRTAIHEVMEQQTISIAKAGILTTLNARCSILAAANPAYGRYNPRRSLEQNVQLPAALLSRFDLLWLIQDRPDRDNDLRLAQHITYVHQHSRQPPAQFEPLDMKLMRRYIAMCHERQPTVPESLADYITAAYVEMRREARASKDATYTSARTLLAILRLSTALARLRMVDIVEKEDVNEAIRLMEMSKDSLLGEKGQTARTQRPADVIFATIRELVSRGRSVHFSEAEQRCISRGFTPAQFQAALDEYEELNVWQVNTSRTRITFV</sequence>
<keyword id="KW-0007">Acetylation</keyword>
<keyword id="KW-0067">ATP-binding</keyword>
<keyword id="KW-0131">Cell cycle</keyword>
<keyword id="KW-0158">Chromosome</keyword>
<keyword id="KW-0235">DNA replication</keyword>
<keyword id="KW-0238">DNA-binding</keyword>
<keyword id="KW-0325">Glycoprotein</keyword>
<keyword id="KW-0347">Helicase</keyword>
<keyword id="KW-0378">Hydrolase</keyword>
<keyword id="KW-1017">Isopeptide bond</keyword>
<keyword id="KW-0547">Nucleotide-binding</keyword>
<keyword id="KW-0539">Nucleus</keyword>
<keyword id="KW-0597">Phosphoprotein</keyword>
<keyword id="KW-1185">Reference proteome</keyword>
<keyword id="KW-0832">Ubl conjugation</keyword>
<name>MCM7_MOUSE</name>
<protein>
    <recommendedName>
        <fullName>DNA replication licensing factor MCM7</fullName>
        <ecNumber>3.6.4.12</ecNumber>
    </recommendedName>
    <alternativeName>
        <fullName>CDC47 homolog</fullName>
    </alternativeName>
</protein>
<dbReference type="EC" id="3.6.4.12"/>
<dbReference type="EMBL" id="D26091">
    <property type="protein sequence ID" value="BAA05084.1"/>
    <property type="molecule type" value="mRNA"/>
</dbReference>
<dbReference type="EMBL" id="BC065164">
    <property type="protein sequence ID" value="AAH65164.1"/>
    <property type="molecule type" value="mRNA"/>
</dbReference>
<dbReference type="EMBL" id="BC066024">
    <property type="protein sequence ID" value="AAH66024.1"/>
    <property type="molecule type" value="mRNA"/>
</dbReference>
<dbReference type="CCDS" id="CCDS19793.1"/>
<dbReference type="PIR" id="JC4580">
    <property type="entry name" value="JC4580"/>
</dbReference>
<dbReference type="RefSeq" id="NP_032594.1">
    <property type="nucleotide sequence ID" value="NM_008568.3"/>
</dbReference>
<dbReference type="SMR" id="Q61881"/>
<dbReference type="BioGRID" id="201350">
    <property type="interactions" value="29"/>
</dbReference>
<dbReference type="ComplexPortal" id="CPX-2941">
    <property type="entry name" value="MCM complex"/>
</dbReference>
<dbReference type="CORUM" id="Q61881"/>
<dbReference type="DIP" id="DIP-45877N"/>
<dbReference type="FunCoup" id="Q61881">
    <property type="interactions" value="3131"/>
</dbReference>
<dbReference type="IntAct" id="Q61881">
    <property type="interactions" value="4"/>
</dbReference>
<dbReference type="MINT" id="Q61881"/>
<dbReference type="STRING" id="10090.ENSMUSP00000000505"/>
<dbReference type="GlyGen" id="Q61881">
    <property type="glycosylation" value="1 site, 1 O-linked glycan (1 site)"/>
</dbReference>
<dbReference type="iPTMnet" id="Q61881"/>
<dbReference type="PhosphoSitePlus" id="Q61881"/>
<dbReference type="SwissPalm" id="Q61881"/>
<dbReference type="jPOST" id="Q61881"/>
<dbReference type="PaxDb" id="10090-ENSMUSP00000000505"/>
<dbReference type="ProteomicsDB" id="295841"/>
<dbReference type="Pumba" id="Q61881"/>
<dbReference type="Antibodypedia" id="1289">
    <property type="antibodies" value="1200 antibodies from 46 providers"/>
</dbReference>
<dbReference type="DNASU" id="17220"/>
<dbReference type="Ensembl" id="ENSMUST00000000505.16">
    <property type="protein sequence ID" value="ENSMUSP00000000505.10"/>
    <property type="gene ID" value="ENSMUSG00000029730.17"/>
</dbReference>
<dbReference type="GeneID" id="17220"/>
<dbReference type="KEGG" id="mmu:17220"/>
<dbReference type="UCSC" id="uc009aeu.1">
    <property type="organism name" value="mouse"/>
</dbReference>
<dbReference type="AGR" id="MGI:1298398"/>
<dbReference type="CTD" id="4176"/>
<dbReference type="MGI" id="MGI:1298398">
    <property type="gene designation" value="Mcm7"/>
</dbReference>
<dbReference type="VEuPathDB" id="HostDB:ENSMUSG00000029730"/>
<dbReference type="eggNOG" id="KOG0482">
    <property type="taxonomic scope" value="Eukaryota"/>
</dbReference>
<dbReference type="GeneTree" id="ENSGT01050000244824"/>
<dbReference type="HOGENOM" id="CLU_000995_7_2_1"/>
<dbReference type="InParanoid" id="Q61881"/>
<dbReference type="OMA" id="AQHVTYV"/>
<dbReference type="OrthoDB" id="3207464at2759"/>
<dbReference type="PhylomeDB" id="Q61881"/>
<dbReference type="TreeFam" id="TF300400"/>
<dbReference type="Reactome" id="R-MMU-176187">
    <property type="pathway name" value="Activation of ATR in response to replication stress"/>
</dbReference>
<dbReference type="Reactome" id="R-MMU-68867">
    <property type="pathway name" value="Assembly of the pre-replicative complex"/>
</dbReference>
<dbReference type="Reactome" id="R-MMU-68949">
    <property type="pathway name" value="Orc1 removal from chromatin"/>
</dbReference>
<dbReference type="Reactome" id="R-MMU-68962">
    <property type="pathway name" value="Activation of the pre-replicative complex"/>
</dbReference>
<dbReference type="Reactome" id="R-MMU-69052">
    <property type="pathway name" value="Switching of origins to a post-replicative state"/>
</dbReference>
<dbReference type="BioGRID-ORCS" id="17220">
    <property type="hits" value="27 hits in 78 CRISPR screens"/>
</dbReference>
<dbReference type="CD-CODE" id="01CA17F3">
    <property type="entry name" value="Centrosome"/>
</dbReference>
<dbReference type="ChiTaRS" id="Mcm7">
    <property type="organism name" value="mouse"/>
</dbReference>
<dbReference type="PRO" id="PR:Q61881"/>
<dbReference type="Proteomes" id="UP000000589">
    <property type="component" value="Chromosome 5"/>
</dbReference>
<dbReference type="RNAct" id="Q61881">
    <property type="molecule type" value="protein"/>
</dbReference>
<dbReference type="Bgee" id="ENSMUSG00000029730">
    <property type="expression patterns" value="Expressed in ventricular zone and 129 other cell types or tissues"/>
</dbReference>
<dbReference type="ExpressionAtlas" id="Q61881">
    <property type="expression patterns" value="baseline and differential"/>
</dbReference>
<dbReference type="GO" id="GO:0071162">
    <property type="term" value="C:CMG complex"/>
    <property type="evidence" value="ECO:0000250"/>
    <property type="project" value="UniProtKB"/>
</dbReference>
<dbReference type="GO" id="GO:0042555">
    <property type="term" value="C:MCM complex"/>
    <property type="evidence" value="ECO:0000314"/>
    <property type="project" value="UniProtKB"/>
</dbReference>
<dbReference type="GO" id="GO:0005634">
    <property type="term" value="C:nucleus"/>
    <property type="evidence" value="ECO:0000314"/>
    <property type="project" value="MGI"/>
</dbReference>
<dbReference type="GO" id="GO:0005524">
    <property type="term" value="F:ATP binding"/>
    <property type="evidence" value="ECO:0007669"/>
    <property type="project" value="UniProtKB-KW"/>
</dbReference>
<dbReference type="GO" id="GO:0016887">
    <property type="term" value="F:ATP hydrolysis activity"/>
    <property type="evidence" value="ECO:0007669"/>
    <property type="project" value="InterPro"/>
</dbReference>
<dbReference type="GO" id="GO:0003678">
    <property type="term" value="F:DNA helicase activity"/>
    <property type="evidence" value="ECO:0007669"/>
    <property type="project" value="Ensembl"/>
</dbReference>
<dbReference type="GO" id="GO:0003697">
    <property type="term" value="F:single-stranded DNA binding"/>
    <property type="evidence" value="ECO:0000353"/>
    <property type="project" value="MGI"/>
</dbReference>
<dbReference type="GO" id="GO:0008283">
    <property type="term" value="P:cell population proliferation"/>
    <property type="evidence" value="ECO:0000314"/>
    <property type="project" value="MGI"/>
</dbReference>
<dbReference type="GO" id="GO:0071364">
    <property type="term" value="P:cellular response to epidermal growth factor stimulus"/>
    <property type="evidence" value="ECO:0007669"/>
    <property type="project" value="Ensembl"/>
</dbReference>
<dbReference type="GO" id="GO:0071466">
    <property type="term" value="P:cellular response to xenobiotic stimulus"/>
    <property type="evidence" value="ECO:0000314"/>
    <property type="project" value="MGI"/>
</dbReference>
<dbReference type="GO" id="GO:0006974">
    <property type="term" value="P:DNA damage response"/>
    <property type="evidence" value="ECO:0007669"/>
    <property type="project" value="Ensembl"/>
</dbReference>
<dbReference type="GO" id="GO:0006260">
    <property type="term" value="P:DNA replication"/>
    <property type="evidence" value="ECO:0000353"/>
    <property type="project" value="MGI"/>
</dbReference>
<dbReference type="GO" id="GO:0006270">
    <property type="term" value="P:DNA replication initiation"/>
    <property type="evidence" value="ECO:0007669"/>
    <property type="project" value="InterPro"/>
</dbReference>
<dbReference type="GO" id="GO:0006279">
    <property type="term" value="P:premeiotic DNA replication"/>
    <property type="evidence" value="ECO:0000303"/>
    <property type="project" value="ComplexPortal"/>
</dbReference>
<dbReference type="CDD" id="cd17758">
    <property type="entry name" value="MCM7"/>
    <property type="match status" value="1"/>
</dbReference>
<dbReference type="FunFam" id="2.20.28.10:FF:000004">
    <property type="entry name" value="DNA replication licensing factor MCM7"/>
    <property type="match status" value="1"/>
</dbReference>
<dbReference type="FunFam" id="3.30.1640.10:FF:000007">
    <property type="entry name" value="DNA replication licensing factor MCM7"/>
    <property type="match status" value="1"/>
</dbReference>
<dbReference type="FunFam" id="3.40.50.300:FF:000288">
    <property type="entry name" value="DNA replication licensing factor MCM7"/>
    <property type="match status" value="1"/>
</dbReference>
<dbReference type="Gene3D" id="2.20.28.10">
    <property type="match status" value="1"/>
</dbReference>
<dbReference type="Gene3D" id="3.30.1640.10">
    <property type="entry name" value="mini-chromosome maintenance (MCM) complex, chain A, domain 1"/>
    <property type="match status" value="1"/>
</dbReference>
<dbReference type="Gene3D" id="2.40.50.140">
    <property type="entry name" value="Nucleic acid-binding proteins"/>
    <property type="match status" value="1"/>
</dbReference>
<dbReference type="Gene3D" id="3.40.50.300">
    <property type="entry name" value="P-loop containing nucleotide triphosphate hydrolases"/>
    <property type="match status" value="1"/>
</dbReference>
<dbReference type="InterPro" id="IPR003593">
    <property type="entry name" value="AAA+_ATPase"/>
</dbReference>
<dbReference type="InterPro" id="IPR031327">
    <property type="entry name" value="MCM"/>
</dbReference>
<dbReference type="InterPro" id="IPR008050">
    <property type="entry name" value="MCM7"/>
</dbReference>
<dbReference type="InterPro" id="IPR018525">
    <property type="entry name" value="MCM_CS"/>
</dbReference>
<dbReference type="InterPro" id="IPR001208">
    <property type="entry name" value="MCM_dom"/>
</dbReference>
<dbReference type="InterPro" id="IPR041562">
    <property type="entry name" value="MCM_lid"/>
</dbReference>
<dbReference type="InterPro" id="IPR027925">
    <property type="entry name" value="MCM_N"/>
</dbReference>
<dbReference type="InterPro" id="IPR033762">
    <property type="entry name" value="MCM_OB"/>
</dbReference>
<dbReference type="InterPro" id="IPR012340">
    <property type="entry name" value="NA-bd_OB-fold"/>
</dbReference>
<dbReference type="InterPro" id="IPR027417">
    <property type="entry name" value="P-loop_NTPase"/>
</dbReference>
<dbReference type="PANTHER" id="PTHR11630">
    <property type="entry name" value="DNA REPLICATION LICENSING FACTOR MCM FAMILY MEMBER"/>
    <property type="match status" value="1"/>
</dbReference>
<dbReference type="PANTHER" id="PTHR11630:SF26">
    <property type="entry name" value="DNA REPLICATION LICENSING FACTOR MCM7"/>
    <property type="match status" value="1"/>
</dbReference>
<dbReference type="Pfam" id="PF24901">
    <property type="entry name" value="HTH_MCM7"/>
    <property type="match status" value="1"/>
</dbReference>
<dbReference type="Pfam" id="PF00493">
    <property type="entry name" value="MCM"/>
    <property type="match status" value="1"/>
</dbReference>
<dbReference type="Pfam" id="PF17855">
    <property type="entry name" value="MCM_lid"/>
    <property type="match status" value="1"/>
</dbReference>
<dbReference type="Pfam" id="PF14551">
    <property type="entry name" value="MCM_N"/>
    <property type="match status" value="1"/>
</dbReference>
<dbReference type="Pfam" id="PF17207">
    <property type="entry name" value="MCM_OB"/>
    <property type="match status" value="1"/>
</dbReference>
<dbReference type="PRINTS" id="PR01657">
    <property type="entry name" value="MCMFAMILY"/>
</dbReference>
<dbReference type="PRINTS" id="PR01663">
    <property type="entry name" value="MCMPROTEIN7"/>
</dbReference>
<dbReference type="SMART" id="SM00382">
    <property type="entry name" value="AAA"/>
    <property type="match status" value="1"/>
</dbReference>
<dbReference type="SMART" id="SM00350">
    <property type="entry name" value="MCM"/>
    <property type="match status" value="1"/>
</dbReference>
<dbReference type="SUPFAM" id="SSF50249">
    <property type="entry name" value="Nucleic acid-binding proteins"/>
    <property type="match status" value="1"/>
</dbReference>
<dbReference type="SUPFAM" id="SSF52540">
    <property type="entry name" value="P-loop containing nucleoside triphosphate hydrolases"/>
    <property type="match status" value="1"/>
</dbReference>
<dbReference type="PROSITE" id="PS00847">
    <property type="entry name" value="MCM_1"/>
    <property type="match status" value="1"/>
</dbReference>
<dbReference type="PROSITE" id="PS50051">
    <property type="entry name" value="MCM_2"/>
    <property type="match status" value="1"/>
</dbReference>
<accession>Q61881</accession>
<proteinExistence type="evidence at protein level"/>